<organism>
    <name type="scientific">Klebsiella pneumoniae subsp. pneumoniae (strain ATCC 700721 / MGH 78578)</name>
    <dbReference type="NCBI Taxonomy" id="272620"/>
    <lineage>
        <taxon>Bacteria</taxon>
        <taxon>Pseudomonadati</taxon>
        <taxon>Pseudomonadota</taxon>
        <taxon>Gammaproteobacteria</taxon>
        <taxon>Enterobacterales</taxon>
        <taxon>Enterobacteriaceae</taxon>
        <taxon>Klebsiella/Raoultella group</taxon>
        <taxon>Klebsiella</taxon>
        <taxon>Klebsiella pneumoniae complex</taxon>
    </lineage>
</organism>
<reference key="1">
    <citation type="submission" date="2006-09" db="EMBL/GenBank/DDBJ databases">
        <authorList>
            <consortium name="The Klebsiella pneumonia Genome Sequencing Project"/>
            <person name="McClelland M."/>
            <person name="Sanderson E.K."/>
            <person name="Spieth J."/>
            <person name="Clifton W.S."/>
            <person name="Latreille P."/>
            <person name="Sabo A."/>
            <person name="Pepin K."/>
            <person name="Bhonagiri V."/>
            <person name="Porwollik S."/>
            <person name="Ali J."/>
            <person name="Wilson R.K."/>
        </authorList>
    </citation>
    <scope>NUCLEOTIDE SEQUENCE [LARGE SCALE GENOMIC DNA]</scope>
    <source>
        <strain>ATCC 700721 / MGH 78578</strain>
    </source>
</reference>
<evidence type="ECO:0000255" key="1">
    <source>
        <dbReference type="HAMAP-Rule" id="MF_01529"/>
    </source>
</evidence>
<comment type="subcellular location">
    <subcellularLocation>
        <location evidence="1">Cell inner membrane</location>
        <topology evidence="1">Multi-pass membrane protein</topology>
    </subcellularLocation>
</comment>
<comment type="similarity">
    <text evidence="1">Belongs to the major facilitator superfamily. DHA1 family. MdtH (TC 2.A.1.2.21) subfamily.</text>
</comment>
<gene>
    <name evidence="1" type="primary">mdtH</name>
    <name type="ordered locus">KPN78578_10480</name>
    <name type="ORF">KPN_01076</name>
</gene>
<sequence length="402" mass="43931">MSRVSQARSLGKYFLLVDNMLVVLGFFVVFPLISIRFVDQMGWAALMVGIALGLRQLVQQGLGIFGGAIADRFGAKPMIVTGMLMRAGGFAAMAVAHEPWVLWFSCILSGLGGTLFDPPRAALVVKLVRPHQRGRFFSILMMQDSAGAVIGALLGSWLLQYDFRLVCSAGAALFIACAAFNAWYLPAWKLSTVKTPIREGLGRVLRDKRFVTYVLTLTGYYMLAVQVMLMLPIMVNDIAGSPAAVKWMYAIEATISLTLLYPIARWSEKRFRLEHRLMAGLLVMTLAMLPIGMTSSLQQLFTLICLFYIGSIIAEPARETLGASLADARARGSYMGFSRLGLAFGGALGYAGGGWLFDAGKAVGQPERPWLMLGAIGVITFLALWWQFSPKRSASGMLEPRT</sequence>
<feature type="chain" id="PRO_1000068680" description="Multidrug resistance protein MdtH">
    <location>
        <begin position="1"/>
        <end position="402"/>
    </location>
</feature>
<feature type="transmembrane region" description="Helical" evidence="1">
    <location>
        <begin position="13"/>
        <end position="33"/>
    </location>
</feature>
<feature type="transmembrane region" description="Helical" evidence="1">
    <location>
        <begin position="34"/>
        <end position="54"/>
    </location>
</feature>
<feature type="transmembrane region" description="Helical" evidence="1">
    <location>
        <begin position="99"/>
        <end position="116"/>
    </location>
</feature>
<feature type="transmembrane region" description="Helical" evidence="1">
    <location>
        <begin position="139"/>
        <end position="159"/>
    </location>
</feature>
<feature type="transmembrane region" description="Helical" evidence="1">
    <location>
        <begin position="165"/>
        <end position="185"/>
    </location>
</feature>
<feature type="transmembrane region" description="Helical" evidence="1">
    <location>
        <begin position="214"/>
        <end position="234"/>
    </location>
</feature>
<feature type="transmembrane region" description="Helical" evidence="1">
    <location>
        <begin position="243"/>
        <end position="263"/>
    </location>
</feature>
<feature type="transmembrane region" description="Helical" evidence="1">
    <location>
        <begin position="277"/>
        <end position="297"/>
    </location>
</feature>
<feature type="transmembrane region" description="Helical" evidence="1">
    <location>
        <begin position="300"/>
        <end position="320"/>
    </location>
</feature>
<feature type="transmembrane region" description="Helical" evidence="1">
    <location>
        <begin position="340"/>
        <end position="360"/>
    </location>
</feature>
<feature type="transmembrane region" description="Helical" evidence="1">
    <location>
        <begin position="369"/>
        <end position="389"/>
    </location>
</feature>
<accession>A6T7D8</accession>
<name>MDTH_KLEP7</name>
<protein>
    <recommendedName>
        <fullName evidence="1">Multidrug resistance protein MdtH</fullName>
    </recommendedName>
</protein>
<keyword id="KW-0997">Cell inner membrane</keyword>
<keyword id="KW-1003">Cell membrane</keyword>
<keyword id="KW-0472">Membrane</keyword>
<keyword id="KW-0812">Transmembrane</keyword>
<keyword id="KW-1133">Transmembrane helix</keyword>
<keyword id="KW-0813">Transport</keyword>
<dbReference type="EMBL" id="CP000647">
    <property type="protein sequence ID" value="ABR76509.1"/>
    <property type="molecule type" value="Genomic_DNA"/>
</dbReference>
<dbReference type="RefSeq" id="WP_012068550.1">
    <property type="nucleotide sequence ID" value="NC_009648.1"/>
</dbReference>
<dbReference type="SMR" id="A6T7D8"/>
<dbReference type="STRING" id="272620.KPN_01076"/>
<dbReference type="PaxDb" id="272620-KPN_01076"/>
<dbReference type="EnsemblBacteria" id="ABR76509">
    <property type="protein sequence ID" value="ABR76509"/>
    <property type="gene ID" value="KPN_01076"/>
</dbReference>
<dbReference type="KEGG" id="kpn:KPN_01076"/>
<dbReference type="HOGENOM" id="CLU_001265_60_2_6"/>
<dbReference type="Proteomes" id="UP000000265">
    <property type="component" value="Chromosome"/>
</dbReference>
<dbReference type="GO" id="GO:0005886">
    <property type="term" value="C:plasma membrane"/>
    <property type="evidence" value="ECO:0007669"/>
    <property type="project" value="UniProtKB-SubCell"/>
</dbReference>
<dbReference type="GO" id="GO:0022857">
    <property type="term" value="F:transmembrane transporter activity"/>
    <property type="evidence" value="ECO:0007669"/>
    <property type="project" value="UniProtKB-UniRule"/>
</dbReference>
<dbReference type="CDD" id="cd17329">
    <property type="entry name" value="MFS_MdtH_MDR_like"/>
    <property type="match status" value="1"/>
</dbReference>
<dbReference type="Gene3D" id="1.20.1250.20">
    <property type="entry name" value="MFS general substrate transporter like domains"/>
    <property type="match status" value="1"/>
</dbReference>
<dbReference type="HAMAP" id="MF_01529">
    <property type="entry name" value="MFS_MdtH"/>
    <property type="match status" value="1"/>
</dbReference>
<dbReference type="InterPro" id="IPR011701">
    <property type="entry name" value="MFS"/>
</dbReference>
<dbReference type="InterPro" id="IPR020846">
    <property type="entry name" value="MFS_dom"/>
</dbReference>
<dbReference type="InterPro" id="IPR036259">
    <property type="entry name" value="MFS_trans_sf"/>
</dbReference>
<dbReference type="InterPro" id="IPR050171">
    <property type="entry name" value="MFS_Transporters"/>
</dbReference>
<dbReference type="InterPro" id="IPR022855">
    <property type="entry name" value="Multidrug-R_MdtH"/>
</dbReference>
<dbReference type="NCBIfam" id="NF008650">
    <property type="entry name" value="PRK11646.1"/>
    <property type="match status" value="1"/>
</dbReference>
<dbReference type="PANTHER" id="PTHR23517:SF2">
    <property type="entry name" value="MULTIDRUG RESISTANCE PROTEIN MDTH"/>
    <property type="match status" value="1"/>
</dbReference>
<dbReference type="PANTHER" id="PTHR23517">
    <property type="entry name" value="RESISTANCE PROTEIN MDTM, PUTATIVE-RELATED-RELATED"/>
    <property type="match status" value="1"/>
</dbReference>
<dbReference type="Pfam" id="PF07690">
    <property type="entry name" value="MFS_1"/>
    <property type="match status" value="1"/>
</dbReference>
<dbReference type="SUPFAM" id="SSF103473">
    <property type="entry name" value="MFS general substrate transporter"/>
    <property type="match status" value="1"/>
</dbReference>
<dbReference type="PROSITE" id="PS50850">
    <property type="entry name" value="MFS"/>
    <property type="match status" value="1"/>
</dbReference>
<proteinExistence type="inferred from homology"/>